<comment type="catalytic activity">
    <reaction evidence="1">
        <text>CMP + ATP = CDP + ADP</text>
        <dbReference type="Rhea" id="RHEA:11600"/>
        <dbReference type="ChEBI" id="CHEBI:30616"/>
        <dbReference type="ChEBI" id="CHEBI:58069"/>
        <dbReference type="ChEBI" id="CHEBI:60377"/>
        <dbReference type="ChEBI" id="CHEBI:456216"/>
        <dbReference type="EC" id="2.7.4.25"/>
    </reaction>
</comment>
<comment type="catalytic activity">
    <reaction evidence="1">
        <text>dCMP + ATP = dCDP + ADP</text>
        <dbReference type="Rhea" id="RHEA:25094"/>
        <dbReference type="ChEBI" id="CHEBI:30616"/>
        <dbReference type="ChEBI" id="CHEBI:57566"/>
        <dbReference type="ChEBI" id="CHEBI:58593"/>
        <dbReference type="ChEBI" id="CHEBI:456216"/>
        <dbReference type="EC" id="2.7.4.25"/>
    </reaction>
</comment>
<comment type="subcellular location">
    <subcellularLocation>
        <location evidence="1">Cytoplasm</location>
    </subcellularLocation>
</comment>
<comment type="similarity">
    <text evidence="1">Belongs to the cytidylate kinase family. Type 1 subfamily.</text>
</comment>
<gene>
    <name evidence="1" type="primary">cmk</name>
    <name type="ordered locus">BA_1518</name>
    <name type="ordered locus">GBAA_1518</name>
    <name type="ordered locus">BAS1407</name>
</gene>
<keyword id="KW-0067">ATP-binding</keyword>
<keyword id="KW-0963">Cytoplasm</keyword>
<keyword id="KW-0418">Kinase</keyword>
<keyword id="KW-0547">Nucleotide-binding</keyword>
<keyword id="KW-1185">Reference proteome</keyword>
<keyword id="KW-0808">Transferase</keyword>
<reference key="1">
    <citation type="journal article" date="2003" name="Nature">
        <title>The genome sequence of Bacillus anthracis Ames and comparison to closely related bacteria.</title>
        <authorList>
            <person name="Read T.D."/>
            <person name="Peterson S.N."/>
            <person name="Tourasse N.J."/>
            <person name="Baillie L.W."/>
            <person name="Paulsen I.T."/>
            <person name="Nelson K.E."/>
            <person name="Tettelin H."/>
            <person name="Fouts D.E."/>
            <person name="Eisen J.A."/>
            <person name="Gill S.R."/>
            <person name="Holtzapple E.K."/>
            <person name="Okstad O.A."/>
            <person name="Helgason E."/>
            <person name="Rilstone J."/>
            <person name="Wu M."/>
            <person name="Kolonay J.F."/>
            <person name="Beanan M.J."/>
            <person name="Dodson R.J."/>
            <person name="Brinkac L.M."/>
            <person name="Gwinn M.L."/>
            <person name="DeBoy R.T."/>
            <person name="Madpu R."/>
            <person name="Daugherty S.C."/>
            <person name="Durkin A.S."/>
            <person name="Haft D.H."/>
            <person name="Nelson W.C."/>
            <person name="Peterson J.D."/>
            <person name="Pop M."/>
            <person name="Khouri H.M."/>
            <person name="Radune D."/>
            <person name="Benton J.L."/>
            <person name="Mahamoud Y."/>
            <person name="Jiang L."/>
            <person name="Hance I.R."/>
            <person name="Weidman J.F."/>
            <person name="Berry K.J."/>
            <person name="Plaut R.D."/>
            <person name="Wolf A.M."/>
            <person name="Watkins K.L."/>
            <person name="Nierman W.C."/>
            <person name="Hazen A."/>
            <person name="Cline R.T."/>
            <person name="Redmond C."/>
            <person name="Thwaite J.E."/>
            <person name="White O."/>
            <person name="Salzberg S.L."/>
            <person name="Thomason B."/>
            <person name="Friedlander A.M."/>
            <person name="Koehler T.M."/>
            <person name="Hanna P.C."/>
            <person name="Kolstoe A.-B."/>
            <person name="Fraser C.M."/>
        </authorList>
    </citation>
    <scope>NUCLEOTIDE SEQUENCE [LARGE SCALE GENOMIC DNA]</scope>
    <source>
        <strain>Ames / isolate Porton</strain>
    </source>
</reference>
<reference key="2">
    <citation type="journal article" date="2009" name="J. Bacteriol.">
        <title>The complete genome sequence of Bacillus anthracis Ames 'Ancestor'.</title>
        <authorList>
            <person name="Ravel J."/>
            <person name="Jiang L."/>
            <person name="Stanley S.T."/>
            <person name="Wilson M.R."/>
            <person name="Decker R.S."/>
            <person name="Read T.D."/>
            <person name="Worsham P."/>
            <person name="Keim P.S."/>
            <person name="Salzberg S.L."/>
            <person name="Fraser-Liggett C.M."/>
            <person name="Rasko D.A."/>
        </authorList>
    </citation>
    <scope>NUCLEOTIDE SEQUENCE [LARGE SCALE GENOMIC DNA]</scope>
    <source>
        <strain>Ames ancestor</strain>
    </source>
</reference>
<reference key="3">
    <citation type="submission" date="2004-01" db="EMBL/GenBank/DDBJ databases">
        <title>Complete genome sequence of Bacillus anthracis Sterne.</title>
        <authorList>
            <person name="Brettin T.S."/>
            <person name="Bruce D."/>
            <person name="Challacombe J.F."/>
            <person name="Gilna P."/>
            <person name="Han C."/>
            <person name="Hill K."/>
            <person name="Hitchcock P."/>
            <person name="Jackson P."/>
            <person name="Keim P."/>
            <person name="Longmire J."/>
            <person name="Lucas S."/>
            <person name="Okinaka R."/>
            <person name="Richardson P."/>
            <person name="Rubin E."/>
            <person name="Tice H."/>
        </authorList>
    </citation>
    <scope>NUCLEOTIDE SEQUENCE [LARGE SCALE GENOMIC DNA]</scope>
    <source>
        <strain>Sterne</strain>
    </source>
</reference>
<sequence>MDKRISIAIDGPAAAGKSTVAKVVAKKLSYVYIDTGAMYRTITYAALEQKVDIENEEQLMEVVKNVKIEFQQGENTQLVFLNGQDVSEVIRTPEVTNRVSIVAKHRLVREEMVRRQQELAEKGGVVMDGRDIGTHVLPDAEVKIFMLASVEERAERRHLENMNKGFDSNLEQLKEEIAQRDKLDSEREVSPLKKADDALELDTTSLSIEEVVQKIMGIVLGVFAK</sequence>
<name>KCY_BACAN</name>
<dbReference type="EC" id="2.7.4.25" evidence="1"/>
<dbReference type="EMBL" id="AE016879">
    <property type="protein sequence ID" value="AAP25455.1"/>
    <property type="molecule type" value="Genomic_DNA"/>
</dbReference>
<dbReference type="EMBL" id="AE017334">
    <property type="protein sequence ID" value="AAT30616.1"/>
    <property type="molecule type" value="Genomic_DNA"/>
</dbReference>
<dbReference type="EMBL" id="AE017225">
    <property type="protein sequence ID" value="AAT53727.1"/>
    <property type="molecule type" value="Genomic_DNA"/>
</dbReference>
<dbReference type="RefSeq" id="NP_843969.1">
    <property type="nucleotide sequence ID" value="NC_003997.3"/>
</dbReference>
<dbReference type="RefSeq" id="WP_000361263.1">
    <property type="nucleotide sequence ID" value="NZ_WXXJ01000014.1"/>
</dbReference>
<dbReference type="RefSeq" id="YP_027676.1">
    <property type="nucleotide sequence ID" value="NC_005945.1"/>
</dbReference>
<dbReference type="SMR" id="Q81SX6"/>
<dbReference type="IntAct" id="Q81SX6">
    <property type="interactions" value="1"/>
</dbReference>
<dbReference type="STRING" id="261594.GBAA_1518"/>
<dbReference type="DNASU" id="1087314"/>
<dbReference type="GeneID" id="45021493"/>
<dbReference type="KEGG" id="ban:BA_1518"/>
<dbReference type="KEGG" id="banh:HYU01_07695"/>
<dbReference type="KEGG" id="bar:GBAA_1518"/>
<dbReference type="KEGG" id="bat:BAS1407"/>
<dbReference type="PATRIC" id="fig|198094.11.peg.1490"/>
<dbReference type="eggNOG" id="COG0283">
    <property type="taxonomic scope" value="Bacteria"/>
</dbReference>
<dbReference type="HOGENOM" id="CLU_079959_0_2_9"/>
<dbReference type="OMA" id="RAITWWM"/>
<dbReference type="OrthoDB" id="9807434at2"/>
<dbReference type="Proteomes" id="UP000000427">
    <property type="component" value="Chromosome"/>
</dbReference>
<dbReference type="Proteomes" id="UP000000594">
    <property type="component" value="Chromosome"/>
</dbReference>
<dbReference type="GO" id="GO:0005829">
    <property type="term" value="C:cytosol"/>
    <property type="evidence" value="ECO:0007669"/>
    <property type="project" value="TreeGrafter"/>
</dbReference>
<dbReference type="GO" id="GO:0005524">
    <property type="term" value="F:ATP binding"/>
    <property type="evidence" value="ECO:0007669"/>
    <property type="project" value="UniProtKB-UniRule"/>
</dbReference>
<dbReference type="GO" id="GO:0036430">
    <property type="term" value="F:CMP kinase activity"/>
    <property type="evidence" value="ECO:0007669"/>
    <property type="project" value="RHEA"/>
</dbReference>
<dbReference type="GO" id="GO:0036431">
    <property type="term" value="F:dCMP kinase activity"/>
    <property type="evidence" value="ECO:0007669"/>
    <property type="project" value="RHEA"/>
</dbReference>
<dbReference type="GO" id="GO:0015949">
    <property type="term" value="P:nucleobase-containing small molecule interconversion"/>
    <property type="evidence" value="ECO:0007669"/>
    <property type="project" value="TreeGrafter"/>
</dbReference>
<dbReference type="GO" id="GO:0006220">
    <property type="term" value="P:pyrimidine nucleotide metabolic process"/>
    <property type="evidence" value="ECO:0007669"/>
    <property type="project" value="UniProtKB-UniRule"/>
</dbReference>
<dbReference type="CDD" id="cd02020">
    <property type="entry name" value="CMPK"/>
    <property type="match status" value="1"/>
</dbReference>
<dbReference type="FunFam" id="3.40.50.300:FF:000484">
    <property type="entry name" value="Cytidylate kinase"/>
    <property type="match status" value="1"/>
</dbReference>
<dbReference type="Gene3D" id="3.40.50.300">
    <property type="entry name" value="P-loop containing nucleotide triphosphate hydrolases"/>
    <property type="match status" value="1"/>
</dbReference>
<dbReference type="HAMAP" id="MF_00238">
    <property type="entry name" value="Cytidyl_kinase_type1"/>
    <property type="match status" value="1"/>
</dbReference>
<dbReference type="InterPro" id="IPR003136">
    <property type="entry name" value="Cytidylate_kin"/>
</dbReference>
<dbReference type="InterPro" id="IPR011994">
    <property type="entry name" value="Cytidylate_kinase_dom"/>
</dbReference>
<dbReference type="InterPro" id="IPR027417">
    <property type="entry name" value="P-loop_NTPase"/>
</dbReference>
<dbReference type="NCBIfam" id="TIGR00017">
    <property type="entry name" value="cmk"/>
    <property type="match status" value="1"/>
</dbReference>
<dbReference type="PANTHER" id="PTHR21299:SF2">
    <property type="entry name" value="CYTIDYLATE KINASE"/>
    <property type="match status" value="1"/>
</dbReference>
<dbReference type="PANTHER" id="PTHR21299">
    <property type="entry name" value="CYTIDYLATE KINASE/PANTOATE-BETA-ALANINE LIGASE"/>
    <property type="match status" value="1"/>
</dbReference>
<dbReference type="Pfam" id="PF02224">
    <property type="entry name" value="Cytidylate_kin"/>
    <property type="match status" value="1"/>
</dbReference>
<dbReference type="SUPFAM" id="SSF52540">
    <property type="entry name" value="P-loop containing nucleoside triphosphate hydrolases"/>
    <property type="match status" value="1"/>
</dbReference>
<accession>Q81SX6</accession>
<accession>Q6I155</accession>
<accession>Q6KV09</accession>
<evidence type="ECO:0000255" key="1">
    <source>
        <dbReference type="HAMAP-Rule" id="MF_00238"/>
    </source>
</evidence>
<proteinExistence type="inferred from homology"/>
<organism>
    <name type="scientific">Bacillus anthracis</name>
    <dbReference type="NCBI Taxonomy" id="1392"/>
    <lineage>
        <taxon>Bacteria</taxon>
        <taxon>Bacillati</taxon>
        <taxon>Bacillota</taxon>
        <taxon>Bacilli</taxon>
        <taxon>Bacillales</taxon>
        <taxon>Bacillaceae</taxon>
        <taxon>Bacillus</taxon>
        <taxon>Bacillus cereus group</taxon>
    </lineage>
</organism>
<feature type="chain" id="PRO_0000131872" description="Cytidylate kinase">
    <location>
        <begin position="1"/>
        <end position="225"/>
    </location>
</feature>
<feature type="binding site" evidence="1">
    <location>
        <begin position="11"/>
        <end position="19"/>
    </location>
    <ligand>
        <name>ATP</name>
        <dbReference type="ChEBI" id="CHEBI:30616"/>
    </ligand>
</feature>
<protein>
    <recommendedName>
        <fullName evidence="1">Cytidylate kinase</fullName>
        <shortName evidence="1">CK</shortName>
        <ecNumber evidence="1">2.7.4.25</ecNumber>
    </recommendedName>
    <alternativeName>
        <fullName evidence="1">Cytidine monophosphate kinase</fullName>
        <shortName evidence="1">CMP kinase</shortName>
    </alternativeName>
</protein>